<feature type="chain" id="PRO_1000051413" description="Asparagine--tRNA ligase">
    <location>
        <begin position="1"/>
        <end position="459"/>
    </location>
</feature>
<proteinExistence type="inferred from homology"/>
<dbReference type="EC" id="6.1.1.22" evidence="1"/>
<dbReference type="EMBL" id="CP000482">
    <property type="protein sequence ID" value="ABK99318.1"/>
    <property type="molecule type" value="Genomic_DNA"/>
</dbReference>
<dbReference type="RefSeq" id="WP_011735595.1">
    <property type="nucleotide sequence ID" value="NC_008609.1"/>
</dbReference>
<dbReference type="SMR" id="A1APP8"/>
<dbReference type="STRING" id="338966.Ppro_1706"/>
<dbReference type="KEGG" id="ppd:Ppro_1706"/>
<dbReference type="eggNOG" id="COG0017">
    <property type="taxonomic scope" value="Bacteria"/>
</dbReference>
<dbReference type="HOGENOM" id="CLU_004553_2_0_7"/>
<dbReference type="OrthoDB" id="9802326at2"/>
<dbReference type="Proteomes" id="UP000006732">
    <property type="component" value="Chromosome"/>
</dbReference>
<dbReference type="GO" id="GO:0005737">
    <property type="term" value="C:cytoplasm"/>
    <property type="evidence" value="ECO:0007669"/>
    <property type="project" value="UniProtKB-SubCell"/>
</dbReference>
<dbReference type="GO" id="GO:0004816">
    <property type="term" value="F:asparagine-tRNA ligase activity"/>
    <property type="evidence" value="ECO:0007669"/>
    <property type="project" value="UniProtKB-UniRule"/>
</dbReference>
<dbReference type="GO" id="GO:0005524">
    <property type="term" value="F:ATP binding"/>
    <property type="evidence" value="ECO:0007669"/>
    <property type="project" value="UniProtKB-UniRule"/>
</dbReference>
<dbReference type="GO" id="GO:0003676">
    <property type="term" value="F:nucleic acid binding"/>
    <property type="evidence" value="ECO:0007669"/>
    <property type="project" value="InterPro"/>
</dbReference>
<dbReference type="GO" id="GO:0006421">
    <property type="term" value="P:asparaginyl-tRNA aminoacylation"/>
    <property type="evidence" value="ECO:0007669"/>
    <property type="project" value="UniProtKB-UniRule"/>
</dbReference>
<dbReference type="CDD" id="cd00776">
    <property type="entry name" value="AsxRS_core"/>
    <property type="match status" value="1"/>
</dbReference>
<dbReference type="CDD" id="cd04318">
    <property type="entry name" value="EcAsnRS_like_N"/>
    <property type="match status" value="1"/>
</dbReference>
<dbReference type="FunFam" id="3.30.930.10:FF:000016">
    <property type="entry name" value="Asparagine--tRNA ligase"/>
    <property type="match status" value="1"/>
</dbReference>
<dbReference type="Gene3D" id="3.30.930.10">
    <property type="entry name" value="Bira Bifunctional Protein, Domain 2"/>
    <property type="match status" value="1"/>
</dbReference>
<dbReference type="Gene3D" id="2.40.50.140">
    <property type="entry name" value="Nucleic acid-binding proteins"/>
    <property type="match status" value="1"/>
</dbReference>
<dbReference type="HAMAP" id="MF_00534">
    <property type="entry name" value="Asn_tRNA_synth"/>
    <property type="match status" value="1"/>
</dbReference>
<dbReference type="InterPro" id="IPR004364">
    <property type="entry name" value="Aa-tRNA-synt_II"/>
</dbReference>
<dbReference type="InterPro" id="IPR006195">
    <property type="entry name" value="aa-tRNA-synth_II"/>
</dbReference>
<dbReference type="InterPro" id="IPR045864">
    <property type="entry name" value="aa-tRNA-synth_II/BPL/LPL"/>
</dbReference>
<dbReference type="InterPro" id="IPR004522">
    <property type="entry name" value="Asn-tRNA-ligase"/>
</dbReference>
<dbReference type="InterPro" id="IPR002312">
    <property type="entry name" value="Asp/Asn-tRNA-synth_IIb"/>
</dbReference>
<dbReference type="InterPro" id="IPR012340">
    <property type="entry name" value="NA-bd_OB-fold"/>
</dbReference>
<dbReference type="InterPro" id="IPR004365">
    <property type="entry name" value="NA-bd_OB_tRNA"/>
</dbReference>
<dbReference type="NCBIfam" id="TIGR00457">
    <property type="entry name" value="asnS"/>
    <property type="match status" value="1"/>
</dbReference>
<dbReference type="NCBIfam" id="NF003037">
    <property type="entry name" value="PRK03932.1"/>
    <property type="match status" value="1"/>
</dbReference>
<dbReference type="PANTHER" id="PTHR22594:SF34">
    <property type="entry name" value="ASPARAGINE--TRNA LIGASE, MITOCHONDRIAL-RELATED"/>
    <property type="match status" value="1"/>
</dbReference>
<dbReference type="PANTHER" id="PTHR22594">
    <property type="entry name" value="ASPARTYL/LYSYL-TRNA SYNTHETASE"/>
    <property type="match status" value="1"/>
</dbReference>
<dbReference type="Pfam" id="PF00152">
    <property type="entry name" value="tRNA-synt_2"/>
    <property type="match status" value="1"/>
</dbReference>
<dbReference type="Pfam" id="PF01336">
    <property type="entry name" value="tRNA_anti-codon"/>
    <property type="match status" value="1"/>
</dbReference>
<dbReference type="PRINTS" id="PR01042">
    <property type="entry name" value="TRNASYNTHASP"/>
</dbReference>
<dbReference type="SUPFAM" id="SSF55681">
    <property type="entry name" value="Class II aaRS and biotin synthetases"/>
    <property type="match status" value="1"/>
</dbReference>
<dbReference type="SUPFAM" id="SSF50249">
    <property type="entry name" value="Nucleic acid-binding proteins"/>
    <property type="match status" value="1"/>
</dbReference>
<dbReference type="PROSITE" id="PS50862">
    <property type="entry name" value="AA_TRNA_LIGASE_II"/>
    <property type="match status" value="1"/>
</dbReference>
<evidence type="ECO:0000255" key="1">
    <source>
        <dbReference type="HAMAP-Rule" id="MF_00534"/>
    </source>
</evidence>
<sequence length="459" mass="51733">MRTIIRQLLSQGVSGQTYAIAGWVRSLRISKGIAFIALNDGSNLAGIQVVVEEQSPAFSEIDAIATGCSLRVTGTLVASPAAGQERELRAESIAIVGTSDENYPLQKKRHSFEYLREIAHLRPRSNTFGAVFRLRSRLAQAIHRFFGDNNFLYVHTPIITASDCEGAGELFRVTTLDAASPPLLEGRPDFGQDFFGQKTGLTVSGQLEGELFALAFSDIYTFGPTFRAENSNTPRHAAEFWMIEPEMAFADLADDAALAEKFVRYLCRFALEECAEEMAFFDRQIEKGLLERVRRVAEADFVRMEYDEAIQRLQRSGVTFSYPVEWGLDLQTEHERYITEKIVGGPAFILNYPRDIKAFYMRSNPDNRTVAAMDLLVPKVGEIIGGSQREERLDVLEARMAELGIAREPLWWYLESRRWGSCPHAGFGLGFERLVMYLSGMENIRDVIPFPRTPRHAEF</sequence>
<accession>A1APP8</accession>
<reference key="1">
    <citation type="submission" date="2006-10" db="EMBL/GenBank/DDBJ databases">
        <title>Complete sequence of chromosome of Pelobacter propionicus DSM 2379.</title>
        <authorList>
            <consortium name="US DOE Joint Genome Institute"/>
            <person name="Copeland A."/>
            <person name="Lucas S."/>
            <person name="Lapidus A."/>
            <person name="Barry K."/>
            <person name="Detter J.C."/>
            <person name="Glavina del Rio T."/>
            <person name="Hammon N."/>
            <person name="Israni S."/>
            <person name="Dalin E."/>
            <person name="Tice H."/>
            <person name="Pitluck S."/>
            <person name="Saunders E."/>
            <person name="Brettin T."/>
            <person name="Bruce D."/>
            <person name="Han C."/>
            <person name="Tapia R."/>
            <person name="Schmutz J."/>
            <person name="Larimer F."/>
            <person name="Land M."/>
            <person name="Hauser L."/>
            <person name="Kyrpides N."/>
            <person name="Kim E."/>
            <person name="Lovley D."/>
            <person name="Richardson P."/>
        </authorList>
    </citation>
    <scope>NUCLEOTIDE SEQUENCE [LARGE SCALE GENOMIC DNA]</scope>
    <source>
        <strain>DSM 2379 / NBRC 103807 / OttBd1</strain>
    </source>
</reference>
<protein>
    <recommendedName>
        <fullName evidence="1">Asparagine--tRNA ligase</fullName>
        <ecNumber evidence="1">6.1.1.22</ecNumber>
    </recommendedName>
    <alternativeName>
        <fullName evidence="1">Asparaginyl-tRNA synthetase</fullName>
        <shortName evidence="1">AsnRS</shortName>
    </alternativeName>
</protein>
<organism>
    <name type="scientific">Pelobacter propionicus (strain DSM 2379 / NBRC 103807 / OttBd1)</name>
    <dbReference type="NCBI Taxonomy" id="338966"/>
    <lineage>
        <taxon>Bacteria</taxon>
        <taxon>Pseudomonadati</taxon>
        <taxon>Thermodesulfobacteriota</taxon>
        <taxon>Desulfuromonadia</taxon>
        <taxon>Desulfuromonadales</taxon>
        <taxon>Desulfuromonadaceae</taxon>
        <taxon>Pelobacter</taxon>
    </lineage>
</organism>
<name>SYN_PELPD</name>
<comment type="catalytic activity">
    <reaction evidence="1">
        <text>tRNA(Asn) + L-asparagine + ATP = L-asparaginyl-tRNA(Asn) + AMP + diphosphate + H(+)</text>
        <dbReference type="Rhea" id="RHEA:11180"/>
        <dbReference type="Rhea" id="RHEA-COMP:9659"/>
        <dbReference type="Rhea" id="RHEA-COMP:9674"/>
        <dbReference type="ChEBI" id="CHEBI:15378"/>
        <dbReference type="ChEBI" id="CHEBI:30616"/>
        <dbReference type="ChEBI" id="CHEBI:33019"/>
        <dbReference type="ChEBI" id="CHEBI:58048"/>
        <dbReference type="ChEBI" id="CHEBI:78442"/>
        <dbReference type="ChEBI" id="CHEBI:78515"/>
        <dbReference type="ChEBI" id="CHEBI:456215"/>
        <dbReference type="EC" id="6.1.1.22"/>
    </reaction>
</comment>
<comment type="subunit">
    <text evidence="1">Homodimer.</text>
</comment>
<comment type="subcellular location">
    <subcellularLocation>
        <location evidence="1">Cytoplasm</location>
    </subcellularLocation>
</comment>
<comment type="similarity">
    <text evidence="1">Belongs to the class-II aminoacyl-tRNA synthetase family.</text>
</comment>
<keyword id="KW-0030">Aminoacyl-tRNA synthetase</keyword>
<keyword id="KW-0067">ATP-binding</keyword>
<keyword id="KW-0963">Cytoplasm</keyword>
<keyword id="KW-0436">Ligase</keyword>
<keyword id="KW-0547">Nucleotide-binding</keyword>
<keyword id="KW-0648">Protein biosynthesis</keyword>
<keyword id="KW-1185">Reference proteome</keyword>
<gene>
    <name evidence="1" type="primary">asnS</name>
    <name type="ordered locus">Ppro_1706</name>
</gene>